<proteinExistence type="evidence at protein level"/>
<sequence>MAMAQKLSHLLPSLRQVIQEPQLSLQPEPVFTVDRAEVPPLFWKPYIYAGYRPLHQTWRFYFRTLFQQHNEAVNVWTHLLAALVLLLRLALFVETVDFWGDPHALPLFIIVLASFTYLSFSALAHLLQAKSEFWHYSFFFLDYVGVAVYQFGSALAHFYYAIEPAWHAQVQAVFLPMAAFLAWLSCIGSCYNKYIQKPGLLGRTCQEVPSVLAYALDISPVVHRIFVSSDPTTDDPALLYHKCQVVFFLLAAAFFSTFMPERWFPGSCHVFGQGHQLFHIFLVLCTLAQLEAVALDYEARRPIYEPLHTHWPHNFSGLFLLTVGSSILTAFLLSQLVQRKLDQKTK</sequence>
<protein>
    <recommendedName>
        <fullName evidence="7">Membrane progestin receptor alpha</fullName>
        <shortName evidence="7">mPR alpha</shortName>
    </recommendedName>
    <alternativeName>
        <fullName evidence="7">Membrane progesterone P4 receptor alpha</fullName>
    </alternativeName>
    <alternativeName>
        <fullName evidence="7">Membrane progesterone receptor alpha</fullName>
    </alternativeName>
    <alternativeName>
        <fullName>Progesterone and adipoQ receptor family member 7</fullName>
    </alternativeName>
    <alternativeName>
        <fullName evidence="6">Progestin and adipoQ receptor family member 7</fullName>
    </alternativeName>
    <alternativeName>
        <fullName>Progestin and adipoQ receptor family member VII</fullName>
    </alternativeName>
</protein>
<feature type="chain" id="PRO_0000218835" description="Membrane progestin receptor alpha">
    <location>
        <begin position="1"/>
        <end position="346"/>
    </location>
</feature>
<feature type="topological domain" description="Cytoplasmic" evidence="1">
    <location>
        <begin position="1"/>
        <end position="72"/>
    </location>
</feature>
<feature type="transmembrane region" description="Helical; Name=1" evidence="1">
    <location>
        <begin position="73"/>
        <end position="93"/>
    </location>
</feature>
<feature type="topological domain" description="Extracellular" evidence="1">
    <location>
        <begin position="94"/>
        <end position="103"/>
    </location>
</feature>
<feature type="transmembrane region" description="Helical; Name=2" evidence="1">
    <location>
        <begin position="104"/>
        <end position="124"/>
    </location>
</feature>
<feature type="topological domain" description="Cytoplasmic" evidence="1">
    <location>
        <begin position="125"/>
        <end position="137"/>
    </location>
</feature>
<feature type="transmembrane region" description="Helical; Name=3" evidence="1">
    <location>
        <begin position="138"/>
        <end position="158"/>
    </location>
</feature>
<feature type="topological domain" description="Extracellular" evidence="1">
    <location>
        <begin position="159"/>
        <end position="169"/>
    </location>
</feature>
<feature type="transmembrane region" description="Helical; Name=4" evidence="1">
    <location>
        <begin position="170"/>
        <end position="190"/>
    </location>
</feature>
<feature type="topological domain" description="Cytoplasmic" evidence="1">
    <location>
        <begin position="191"/>
        <end position="237"/>
    </location>
</feature>
<feature type="transmembrane region" description="Helical; Name=5" evidence="1">
    <location>
        <begin position="238"/>
        <end position="258"/>
    </location>
</feature>
<feature type="topological domain" description="Extracellular" evidence="1">
    <location>
        <begin position="259"/>
        <end position="276"/>
    </location>
</feature>
<feature type="transmembrane region" description="Helical; Name=6" evidence="1">
    <location>
        <begin position="277"/>
        <end position="297"/>
    </location>
</feature>
<feature type="topological domain" description="Cytoplasmic" evidence="1">
    <location>
        <begin position="298"/>
        <end position="316"/>
    </location>
</feature>
<feature type="transmembrane region" description="Helical; Name=7" evidence="1">
    <location>
        <begin position="317"/>
        <end position="337"/>
    </location>
</feature>
<feature type="topological domain" description="Extracellular" evidence="1">
    <location>
        <begin position="338"/>
        <end position="346"/>
    </location>
</feature>
<feature type="sequence variant" id="VAR_060999" description="In dbSNP:rs55948644." evidence="3">
    <original>V</original>
    <variation>M</variation>
    <location>
        <position position="227"/>
    </location>
</feature>
<feature type="sequence variant" id="VAR_048204" description="In dbSNP:rs6689014.">
    <original>G</original>
    <variation>R</variation>
    <location>
        <position position="272"/>
    </location>
</feature>
<comment type="function">
    <text evidence="2 5 7">Plasma membrane progesterone (P4) receptor coupled to G proteins (PubMed:23763432). Seems to act through a G(i) mediated pathway (PubMed:23763432). May be involved in oocyte maturation (PubMed:12601167). Involved in neurosteroid inhibition of apoptosis (PubMed:23161870). Also binds dehydroepiandrosterone (DHEA), pregnanolone, pregnenolone and allopregnanolone (PubMed:23161870).</text>
</comment>
<comment type="interaction">
    <interactant intactId="EBI-10694587">
        <id>Q86WK9</id>
    </interactant>
    <interactant intactId="EBI-781551">
        <id>Q9Y282</id>
        <label>ERGIC3</label>
    </interactant>
    <organismsDiffer>false</organismsDiffer>
    <experiments>3</experiments>
</comment>
<comment type="interaction">
    <interactant intactId="EBI-10694587">
        <id>Q86WK9</id>
    </interactant>
    <interactant intactId="EBI-18304435">
        <id>Q5JX71</id>
        <label>FAM209A</label>
    </interactant>
    <organismsDiffer>false</organismsDiffer>
    <experiments>3</experiments>
</comment>
<comment type="interaction">
    <interactant intactId="EBI-10694587">
        <id>Q86WK9</id>
    </interactant>
    <interactant intactId="EBI-466029">
        <id>P42858</id>
        <label>HTT</label>
    </interactant>
    <organismsDiffer>false</organismsDiffer>
    <experiments>3</experiments>
</comment>
<comment type="subcellular location">
    <subcellularLocation>
        <location evidence="7">Cell membrane</location>
        <topology evidence="1">Multi-pass membrane protein</topology>
    </subcellularLocation>
</comment>
<comment type="tissue specificity">
    <text evidence="2 4">Expressed in a wide range of tissues including ovary, testis, placenta, uterus and bladder.</text>
</comment>
<comment type="miscellaneous">
    <text evidence="7">Non-classical progesterone receptors involved in extranuclear signaling are classified in 2 groups: the class II progestin and adipoQ receptor (PAQR) family (also called mPRs) (PAQR5, PAQR6, PAQR7, PAQR8 and PAQR9) and the b5-like heme/steroid-binding protein family (also called MAPRs) (PGRMC1, PGRMC2, NENF and CYB5D2).</text>
</comment>
<comment type="similarity">
    <text evidence="8">Belongs to the ADIPOR family.</text>
</comment>
<accession>Q86WK9</accession>
<accession>A2A2D3</accession>
<accession>Q5XKF9</accession>
<accession>Q86VE4</accession>
<reference key="1">
    <citation type="journal article" date="2003" name="Proc. Natl. Acad. Sci. U.S.A.">
        <title>Identification, classification, and partial characterization of genes in humans and other vertebrates homologous to a fish membrane progestin receptor.</title>
        <authorList>
            <person name="Zhu Y."/>
            <person name="Bond J."/>
            <person name="Thomas P."/>
        </authorList>
    </citation>
    <scope>NUCLEOTIDE SEQUENCE [MRNA]</scope>
    <scope>FUNCTION</scope>
    <scope>TISSUE SPECIFICITY</scope>
    <source>
        <tissue>Testis</tissue>
    </source>
</reference>
<reference key="2">
    <citation type="journal article" date="2005" name="J. Mol. Evol.">
        <title>PAQR proteins: a novel membrane receptor family defined by an ancient 7-transmembrane pass motif.</title>
        <authorList>
            <person name="Tang Y.T."/>
            <person name="Hu T."/>
            <person name="Arterburn M."/>
            <person name="Boyle B."/>
            <person name="Bright J.M."/>
            <person name="Emtage P.C."/>
            <person name="Funk W.D."/>
        </authorList>
    </citation>
    <scope>NUCLEOTIDE SEQUENCE [MRNA]</scope>
    <scope>TISSUE SPECIFICITY</scope>
</reference>
<reference key="3">
    <citation type="journal article" date="2006" name="Nature">
        <title>The DNA sequence and biological annotation of human chromosome 1.</title>
        <authorList>
            <person name="Gregory S.G."/>
            <person name="Barlow K.F."/>
            <person name="McLay K.E."/>
            <person name="Kaul R."/>
            <person name="Swarbreck D."/>
            <person name="Dunham A."/>
            <person name="Scott C.E."/>
            <person name="Howe K.L."/>
            <person name="Woodfine K."/>
            <person name="Spencer C.C.A."/>
            <person name="Jones M.C."/>
            <person name="Gillson C."/>
            <person name="Searle S."/>
            <person name="Zhou Y."/>
            <person name="Kokocinski F."/>
            <person name="McDonald L."/>
            <person name="Evans R."/>
            <person name="Phillips K."/>
            <person name="Atkinson A."/>
            <person name="Cooper R."/>
            <person name="Jones C."/>
            <person name="Hall R.E."/>
            <person name="Andrews T.D."/>
            <person name="Lloyd C."/>
            <person name="Ainscough R."/>
            <person name="Almeida J.P."/>
            <person name="Ambrose K.D."/>
            <person name="Anderson F."/>
            <person name="Andrew R.W."/>
            <person name="Ashwell R.I.S."/>
            <person name="Aubin K."/>
            <person name="Babbage A.K."/>
            <person name="Bagguley C.L."/>
            <person name="Bailey J."/>
            <person name="Beasley H."/>
            <person name="Bethel G."/>
            <person name="Bird C.P."/>
            <person name="Bray-Allen S."/>
            <person name="Brown J.Y."/>
            <person name="Brown A.J."/>
            <person name="Buckley D."/>
            <person name="Burton J."/>
            <person name="Bye J."/>
            <person name="Carder C."/>
            <person name="Chapman J.C."/>
            <person name="Clark S.Y."/>
            <person name="Clarke G."/>
            <person name="Clee C."/>
            <person name="Cobley V."/>
            <person name="Collier R.E."/>
            <person name="Corby N."/>
            <person name="Coville G.J."/>
            <person name="Davies J."/>
            <person name="Deadman R."/>
            <person name="Dunn M."/>
            <person name="Earthrowl M."/>
            <person name="Ellington A.G."/>
            <person name="Errington H."/>
            <person name="Frankish A."/>
            <person name="Frankland J."/>
            <person name="French L."/>
            <person name="Garner P."/>
            <person name="Garnett J."/>
            <person name="Gay L."/>
            <person name="Ghori M.R.J."/>
            <person name="Gibson R."/>
            <person name="Gilby L.M."/>
            <person name="Gillett W."/>
            <person name="Glithero R.J."/>
            <person name="Grafham D.V."/>
            <person name="Griffiths C."/>
            <person name="Griffiths-Jones S."/>
            <person name="Grocock R."/>
            <person name="Hammond S."/>
            <person name="Harrison E.S.I."/>
            <person name="Hart E."/>
            <person name="Haugen E."/>
            <person name="Heath P.D."/>
            <person name="Holmes S."/>
            <person name="Holt K."/>
            <person name="Howden P.J."/>
            <person name="Hunt A.R."/>
            <person name="Hunt S.E."/>
            <person name="Hunter G."/>
            <person name="Isherwood J."/>
            <person name="James R."/>
            <person name="Johnson C."/>
            <person name="Johnson D."/>
            <person name="Joy A."/>
            <person name="Kay M."/>
            <person name="Kershaw J.K."/>
            <person name="Kibukawa M."/>
            <person name="Kimberley A.M."/>
            <person name="King A."/>
            <person name="Knights A.J."/>
            <person name="Lad H."/>
            <person name="Laird G."/>
            <person name="Lawlor S."/>
            <person name="Leongamornlert D.A."/>
            <person name="Lloyd D.M."/>
            <person name="Loveland J."/>
            <person name="Lovell J."/>
            <person name="Lush M.J."/>
            <person name="Lyne R."/>
            <person name="Martin S."/>
            <person name="Mashreghi-Mohammadi M."/>
            <person name="Matthews L."/>
            <person name="Matthews N.S.W."/>
            <person name="McLaren S."/>
            <person name="Milne S."/>
            <person name="Mistry S."/>
            <person name="Moore M.J.F."/>
            <person name="Nickerson T."/>
            <person name="O'Dell C.N."/>
            <person name="Oliver K."/>
            <person name="Palmeiri A."/>
            <person name="Palmer S.A."/>
            <person name="Parker A."/>
            <person name="Patel D."/>
            <person name="Pearce A.V."/>
            <person name="Peck A.I."/>
            <person name="Pelan S."/>
            <person name="Phelps K."/>
            <person name="Phillimore B.J."/>
            <person name="Plumb R."/>
            <person name="Rajan J."/>
            <person name="Raymond C."/>
            <person name="Rouse G."/>
            <person name="Saenphimmachak C."/>
            <person name="Sehra H.K."/>
            <person name="Sheridan E."/>
            <person name="Shownkeen R."/>
            <person name="Sims S."/>
            <person name="Skuce C.D."/>
            <person name="Smith M."/>
            <person name="Steward C."/>
            <person name="Subramanian S."/>
            <person name="Sycamore N."/>
            <person name="Tracey A."/>
            <person name="Tromans A."/>
            <person name="Van Helmond Z."/>
            <person name="Wall M."/>
            <person name="Wallis J.M."/>
            <person name="White S."/>
            <person name="Whitehead S.L."/>
            <person name="Wilkinson J.E."/>
            <person name="Willey D.L."/>
            <person name="Williams H."/>
            <person name="Wilming L."/>
            <person name="Wray P.W."/>
            <person name="Wu Z."/>
            <person name="Coulson A."/>
            <person name="Vaudin M."/>
            <person name="Sulston J.E."/>
            <person name="Durbin R.M."/>
            <person name="Hubbard T."/>
            <person name="Wooster R."/>
            <person name="Dunham I."/>
            <person name="Carter N.P."/>
            <person name="McVean G."/>
            <person name="Ross M.T."/>
            <person name="Harrow J."/>
            <person name="Olson M.V."/>
            <person name="Beck S."/>
            <person name="Rogers J."/>
            <person name="Bentley D.R."/>
        </authorList>
    </citation>
    <scope>NUCLEOTIDE SEQUENCE [LARGE SCALE GENOMIC DNA]</scope>
</reference>
<reference key="4">
    <citation type="submission" date="2005-09" db="EMBL/GenBank/DDBJ databases">
        <authorList>
            <person name="Mural R.J."/>
            <person name="Istrail S."/>
            <person name="Sutton G.G."/>
            <person name="Florea L."/>
            <person name="Halpern A.L."/>
            <person name="Mobarry C.M."/>
            <person name="Lippert R."/>
            <person name="Walenz B."/>
            <person name="Shatkay H."/>
            <person name="Dew I."/>
            <person name="Miller J.R."/>
            <person name="Flanigan M.J."/>
            <person name="Edwards N.J."/>
            <person name="Bolanos R."/>
            <person name="Fasulo D."/>
            <person name="Halldorsson B.V."/>
            <person name="Hannenhalli S."/>
            <person name="Turner R."/>
            <person name="Yooseph S."/>
            <person name="Lu F."/>
            <person name="Nusskern D.R."/>
            <person name="Shue B.C."/>
            <person name="Zheng X.H."/>
            <person name="Zhong F."/>
            <person name="Delcher A.L."/>
            <person name="Huson D.H."/>
            <person name="Kravitz S.A."/>
            <person name="Mouchard L."/>
            <person name="Reinert K."/>
            <person name="Remington K.A."/>
            <person name="Clark A.G."/>
            <person name="Waterman M.S."/>
            <person name="Eichler E.E."/>
            <person name="Adams M.D."/>
            <person name="Hunkapiller M.W."/>
            <person name="Myers E.W."/>
            <person name="Venter J.C."/>
        </authorList>
    </citation>
    <scope>NUCLEOTIDE SEQUENCE [LARGE SCALE GENOMIC DNA]</scope>
</reference>
<reference key="5">
    <citation type="journal article" date="2004" name="Genome Res.">
        <title>The status, quality, and expansion of the NIH full-length cDNA project: the Mammalian Gene Collection (MGC).</title>
        <authorList>
            <consortium name="The MGC Project Team"/>
        </authorList>
    </citation>
    <scope>NUCLEOTIDE SEQUENCE [LARGE SCALE MRNA]</scope>
    <scope>VARIANT MET-227</scope>
    <source>
        <tissue>Duodenum</tissue>
        <tissue>Uterus</tissue>
    </source>
</reference>
<reference key="6">
    <citation type="journal article" date="2003" name="Proc. Natl. Acad. Sci. U.S.A.">
        <title>The further redefining of steroid-mediated signaling.</title>
        <authorList>
            <person name="Hammes S.R."/>
        </authorList>
    </citation>
    <scope>REVIEW</scope>
</reference>
<reference key="7">
    <citation type="journal article" date="2013" name="J. Neuroendocrinol.">
        <title>Nonclassical progesterone signalling molecules in the nervous system.</title>
        <authorList>
            <person name="Petersen S.L."/>
            <person name="Intlekofer K.A."/>
            <person name="Moura-Conlon P.J."/>
            <person name="Brewer D.N."/>
            <person name="Del Pino Sans J."/>
            <person name="Lopez J.A."/>
        </authorList>
    </citation>
    <scope>FUNCTION</scope>
    <scope>REVIEW</scope>
    <scope>SUBCELLULAR LOCATION</scope>
</reference>
<reference key="8">
    <citation type="journal article" date="2013" name="Endocrinology">
        <title>Characterization, neurosteroid binding and brain distribution of human membrane progesterone receptors delta and {epsilon} (mPRdelta and mPR{epsilon}) and mPRdelta involvement in neurosteroid inhibition of apoptosis.</title>
        <authorList>
            <person name="Pang Y."/>
            <person name="Dong J."/>
            <person name="Thomas P."/>
        </authorList>
    </citation>
    <scope>FUNCTION</scope>
</reference>
<keyword id="KW-1003">Cell membrane</keyword>
<keyword id="KW-0217">Developmental protein</keyword>
<keyword id="KW-0221">Differentiation</keyword>
<keyword id="KW-0446">Lipid-binding</keyword>
<keyword id="KW-0472">Membrane</keyword>
<keyword id="KW-0896">Oogenesis</keyword>
<keyword id="KW-1267">Proteomics identification</keyword>
<keyword id="KW-0675">Receptor</keyword>
<keyword id="KW-1185">Reference proteome</keyword>
<keyword id="KW-0754">Steroid-binding</keyword>
<keyword id="KW-0812">Transmembrane</keyword>
<keyword id="KW-1133">Transmembrane helix</keyword>
<dbReference type="EMBL" id="AF313620">
    <property type="protein sequence ID" value="AAO47233.1"/>
    <property type="molecule type" value="mRNA"/>
</dbReference>
<dbReference type="EMBL" id="AY424285">
    <property type="protein sequence ID" value="AAR08373.1"/>
    <property type="molecule type" value="mRNA"/>
</dbReference>
<dbReference type="EMBL" id="AL033528">
    <property type="status" value="NOT_ANNOTATED_CDS"/>
    <property type="molecule type" value="Genomic_DNA"/>
</dbReference>
<dbReference type="EMBL" id="CH471059">
    <property type="protein sequence ID" value="EAX07862.1"/>
    <property type="molecule type" value="Genomic_DNA"/>
</dbReference>
<dbReference type="EMBL" id="BC034015">
    <property type="protein sequence ID" value="AAH34015.1"/>
    <property type="molecule type" value="mRNA"/>
</dbReference>
<dbReference type="EMBL" id="BC042298">
    <property type="status" value="NOT_ANNOTATED_CDS"/>
    <property type="molecule type" value="mRNA"/>
</dbReference>
<dbReference type="CCDS" id="CCDS267.1"/>
<dbReference type="RefSeq" id="NP_848509.1">
    <property type="nucleotide sequence ID" value="NM_178422.6"/>
</dbReference>
<dbReference type="RefSeq" id="XP_005245802.1">
    <property type="nucleotide sequence ID" value="XM_005245745.3"/>
</dbReference>
<dbReference type="RefSeq" id="XP_005245803.1">
    <property type="nucleotide sequence ID" value="XM_005245746.4"/>
</dbReference>
<dbReference type="RefSeq" id="XP_011539163.1">
    <property type="nucleotide sequence ID" value="XM_011540861.1"/>
</dbReference>
<dbReference type="RefSeq" id="XP_011539164.1">
    <property type="nucleotide sequence ID" value="XM_011540862.3"/>
</dbReference>
<dbReference type="RefSeq" id="XP_047303920.1">
    <property type="nucleotide sequence ID" value="XM_047447964.1"/>
</dbReference>
<dbReference type="RefSeq" id="XP_054190757.1">
    <property type="nucleotide sequence ID" value="XM_054334782.1"/>
</dbReference>
<dbReference type="RefSeq" id="XP_054190758.1">
    <property type="nucleotide sequence ID" value="XM_054334783.1"/>
</dbReference>
<dbReference type="SMR" id="Q86WK9"/>
<dbReference type="BioGRID" id="127887">
    <property type="interactions" value="8"/>
</dbReference>
<dbReference type="FunCoup" id="Q86WK9">
    <property type="interactions" value="328"/>
</dbReference>
<dbReference type="IntAct" id="Q86WK9">
    <property type="interactions" value="7"/>
</dbReference>
<dbReference type="STRING" id="9606.ENSP00000363414"/>
<dbReference type="iPTMnet" id="Q86WK9"/>
<dbReference type="PhosphoSitePlus" id="Q86WK9"/>
<dbReference type="BioMuta" id="PAQR7"/>
<dbReference type="DMDM" id="51316435"/>
<dbReference type="jPOST" id="Q86WK9"/>
<dbReference type="MassIVE" id="Q86WK9"/>
<dbReference type="PaxDb" id="9606-ENSP00000363414"/>
<dbReference type="PeptideAtlas" id="Q86WK9"/>
<dbReference type="ProteomicsDB" id="70180"/>
<dbReference type="Antibodypedia" id="30521">
    <property type="antibodies" value="157 antibodies from 26 providers"/>
</dbReference>
<dbReference type="DNASU" id="164091"/>
<dbReference type="Ensembl" id="ENST00000374296.4">
    <property type="protein sequence ID" value="ENSP00000363414.3"/>
    <property type="gene ID" value="ENSG00000182749.6"/>
</dbReference>
<dbReference type="Ensembl" id="ENST00000675840.1">
    <property type="protein sequence ID" value="ENSP00000502514.1"/>
    <property type="gene ID" value="ENSG00000182749.6"/>
</dbReference>
<dbReference type="GeneID" id="164091"/>
<dbReference type="KEGG" id="hsa:164091"/>
<dbReference type="MANE-Select" id="ENST00000675840.1">
    <property type="protein sequence ID" value="ENSP00000502514.1"/>
    <property type="RefSeq nucleotide sequence ID" value="NM_178422.6"/>
    <property type="RefSeq protein sequence ID" value="NP_848509.1"/>
</dbReference>
<dbReference type="UCSC" id="uc001bkx.4">
    <property type="organism name" value="human"/>
</dbReference>
<dbReference type="AGR" id="HGNC:23146"/>
<dbReference type="CTD" id="164091"/>
<dbReference type="DisGeNET" id="164091"/>
<dbReference type="GeneCards" id="PAQR7"/>
<dbReference type="HGNC" id="HGNC:23146">
    <property type="gene designation" value="PAQR7"/>
</dbReference>
<dbReference type="HPA" id="ENSG00000182749">
    <property type="expression patterns" value="Low tissue specificity"/>
</dbReference>
<dbReference type="MIM" id="607779">
    <property type="type" value="gene"/>
</dbReference>
<dbReference type="neXtProt" id="NX_Q86WK9"/>
<dbReference type="OpenTargets" id="ENSG00000182749"/>
<dbReference type="PharmGKB" id="PA142671200"/>
<dbReference type="VEuPathDB" id="HostDB:ENSG00000182749"/>
<dbReference type="eggNOG" id="KOG0748">
    <property type="taxonomic scope" value="Eukaryota"/>
</dbReference>
<dbReference type="GeneTree" id="ENSGT00940000161438"/>
<dbReference type="HOGENOM" id="CLU_052356_0_0_1"/>
<dbReference type="InParanoid" id="Q86WK9"/>
<dbReference type="OMA" id="FIFTTCC"/>
<dbReference type="OrthoDB" id="535992at2759"/>
<dbReference type="PAN-GO" id="Q86WK9">
    <property type="GO annotations" value="4 GO annotations based on evolutionary models"/>
</dbReference>
<dbReference type="PhylomeDB" id="Q86WK9"/>
<dbReference type="TreeFam" id="TF319738"/>
<dbReference type="PathwayCommons" id="Q86WK9"/>
<dbReference type="SignaLink" id="Q86WK9"/>
<dbReference type="BioGRID-ORCS" id="164091">
    <property type="hits" value="15 hits in 1154 CRISPR screens"/>
</dbReference>
<dbReference type="ChiTaRS" id="PAQR7">
    <property type="organism name" value="human"/>
</dbReference>
<dbReference type="GenomeRNAi" id="164091"/>
<dbReference type="Pharos" id="Q86WK9">
    <property type="development level" value="Tbio"/>
</dbReference>
<dbReference type="PRO" id="PR:Q86WK9"/>
<dbReference type="Proteomes" id="UP000005640">
    <property type="component" value="Chromosome 1"/>
</dbReference>
<dbReference type="RNAct" id="Q86WK9">
    <property type="molecule type" value="protein"/>
</dbReference>
<dbReference type="Bgee" id="ENSG00000182749">
    <property type="expression patterns" value="Expressed in oviduct epithelium and 181 other cell types or tissues"/>
</dbReference>
<dbReference type="GO" id="GO:0005886">
    <property type="term" value="C:plasma membrane"/>
    <property type="evidence" value="ECO:0000318"/>
    <property type="project" value="GO_Central"/>
</dbReference>
<dbReference type="GO" id="GO:0003707">
    <property type="term" value="F:nuclear steroid receptor activity"/>
    <property type="evidence" value="ECO:0000318"/>
    <property type="project" value="GO_Central"/>
</dbReference>
<dbReference type="GO" id="GO:0005496">
    <property type="term" value="F:steroid binding"/>
    <property type="evidence" value="ECO:0000318"/>
    <property type="project" value="GO_Central"/>
</dbReference>
<dbReference type="GO" id="GO:0048477">
    <property type="term" value="P:oogenesis"/>
    <property type="evidence" value="ECO:0007669"/>
    <property type="project" value="UniProtKB-KW"/>
</dbReference>
<dbReference type="GO" id="GO:0048545">
    <property type="term" value="P:response to steroid hormone"/>
    <property type="evidence" value="ECO:0000318"/>
    <property type="project" value="GO_Central"/>
</dbReference>
<dbReference type="InterPro" id="IPR004254">
    <property type="entry name" value="AdipoR/HlyIII-related"/>
</dbReference>
<dbReference type="PANTHER" id="PTHR20855">
    <property type="entry name" value="ADIPOR/PROGESTIN RECEPTOR-RELATED"/>
    <property type="match status" value="1"/>
</dbReference>
<dbReference type="PANTHER" id="PTHR20855:SF41">
    <property type="entry name" value="MEMBRANE PROGESTIN RECEPTOR ALPHA"/>
    <property type="match status" value="1"/>
</dbReference>
<dbReference type="Pfam" id="PF03006">
    <property type="entry name" value="HlyIII"/>
    <property type="match status" value="1"/>
</dbReference>
<name>PAQR7_HUMAN</name>
<evidence type="ECO:0000255" key="1"/>
<evidence type="ECO:0000269" key="2">
    <source>
    </source>
</evidence>
<evidence type="ECO:0000269" key="3">
    <source>
    </source>
</evidence>
<evidence type="ECO:0000269" key="4">
    <source>
    </source>
</evidence>
<evidence type="ECO:0000269" key="5">
    <source>
    </source>
</evidence>
<evidence type="ECO:0000303" key="6">
    <source>
    </source>
</evidence>
<evidence type="ECO:0000303" key="7">
    <source>
    </source>
</evidence>
<evidence type="ECO:0000305" key="8"/>
<evidence type="ECO:0000312" key="9">
    <source>
        <dbReference type="HGNC" id="HGNC:23146"/>
    </source>
</evidence>
<organism>
    <name type="scientific">Homo sapiens</name>
    <name type="common">Human</name>
    <dbReference type="NCBI Taxonomy" id="9606"/>
    <lineage>
        <taxon>Eukaryota</taxon>
        <taxon>Metazoa</taxon>
        <taxon>Chordata</taxon>
        <taxon>Craniata</taxon>
        <taxon>Vertebrata</taxon>
        <taxon>Euteleostomi</taxon>
        <taxon>Mammalia</taxon>
        <taxon>Eutheria</taxon>
        <taxon>Euarchontoglires</taxon>
        <taxon>Primates</taxon>
        <taxon>Haplorrhini</taxon>
        <taxon>Catarrhini</taxon>
        <taxon>Hominidae</taxon>
        <taxon>Homo</taxon>
    </lineage>
</organism>
<gene>
    <name evidence="9" type="primary">PAQR7</name>
    <name type="synonym">MRPA</name>
</gene>